<dbReference type="EMBL" id="CP000942">
    <property type="protein sequence ID" value="ACA32901.1"/>
    <property type="molecule type" value="Genomic_DNA"/>
</dbReference>
<dbReference type="RefSeq" id="WP_006688753.1">
    <property type="nucleotide sequence ID" value="NC_010503.1"/>
</dbReference>
<dbReference type="SMR" id="B1AIV8"/>
<dbReference type="GeneID" id="29672437"/>
<dbReference type="KEGG" id="upa:UPA3_0335"/>
<dbReference type="HOGENOM" id="CLU_006301_5_1_14"/>
<dbReference type="Proteomes" id="UP000002162">
    <property type="component" value="Chromosome"/>
</dbReference>
<dbReference type="GO" id="GO:0005829">
    <property type="term" value="C:cytosol"/>
    <property type="evidence" value="ECO:0007669"/>
    <property type="project" value="TreeGrafter"/>
</dbReference>
<dbReference type="GO" id="GO:0005525">
    <property type="term" value="F:GTP binding"/>
    <property type="evidence" value="ECO:0007669"/>
    <property type="project" value="UniProtKB-KW"/>
</dbReference>
<dbReference type="GO" id="GO:0003924">
    <property type="term" value="F:GTPase activity"/>
    <property type="evidence" value="ECO:0007669"/>
    <property type="project" value="UniProtKB-UniRule"/>
</dbReference>
<dbReference type="GO" id="GO:0003743">
    <property type="term" value="F:translation initiation factor activity"/>
    <property type="evidence" value="ECO:0007669"/>
    <property type="project" value="UniProtKB-UniRule"/>
</dbReference>
<dbReference type="CDD" id="cd01887">
    <property type="entry name" value="IF2_eIF5B"/>
    <property type="match status" value="1"/>
</dbReference>
<dbReference type="CDD" id="cd03702">
    <property type="entry name" value="IF2_mtIF2_II"/>
    <property type="match status" value="1"/>
</dbReference>
<dbReference type="CDD" id="cd03692">
    <property type="entry name" value="mtIF2_IVc"/>
    <property type="match status" value="1"/>
</dbReference>
<dbReference type="FunFam" id="2.40.30.10:FF:000007">
    <property type="entry name" value="Translation initiation factor IF-2"/>
    <property type="match status" value="1"/>
</dbReference>
<dbReference type="FunFam" id="2.40.30.10:FF:000008">
    <property type="entry name" value="Translation initiation factor IF-2"/>
    <property type="match status" value="1"/>
</dbReference>
<dbReference type="FunFam" id="3.40.50.10050:FF:000001">
    <property type="entry name" value="Translation initiation factor IF-2"/>
    <property type="match status" value="1"/>
</dbReference>
<dbReference type="FunFam" id="3.40.50.300:FF:000019">
    <property type="entry name" value="Translation initiation factor IF-2"/>
    <property type="match status" value="1"/>
</dbReference>
<dbReference type="Gene3D" id="3.40.50.300">
    <property type="entry name" value="P-loop containing nucleotide triphosphate hydrolases"/>
    <property type="match status" value="1"/>
</dbReference>
<dbReference type="Gene3D" id="2.40.30.10">
    <property type="entry name" value="Translation factors"/>
    <property type="match status" value="2"/>
</dbReference>
<dbReference type="Gene3D" id="3.40.50.10050">
    <property type="entry name" value="Translation initiation factor IF- 2, domain 3"/>
    <property type="match status" value="1"/>
</dbReference>
<dbReference type="HAMAP" id="MF_00100_B">
    <property type="entry name" value="IF_2_B"/>
    <property type="match status" value="1"/>
</dbReference>
<dbReference type="InterPro" id="IPR053905">
    <property type="entry name" value="EF-G-like_DII"/>
</dbReference>
<dbReference type="InterPro" id="IPR044145">
    <property type="entry name" value="IF2_II"/>
</dbReference>
<dbReference type="InterPro" id="IPR006847">
    <property type="entry name" value="IF2_N"/>
</dbReference>
<dbReference type="InterPro" id="IPR027417">
    <property type="entry name" value="P-loop_NTPase"/>
</dbReference>
<dbReference type="InterPro" id="IPR005225">
    <property type="entry name" value="Small_GTP-bd"/>
</dbReference>
<dbReference type="InterPro" id="IPR000795">
    <property type="entry name" value="T_Tr_GTP-bd_dom"/>
</dbReference>
<dbReference type="InterPro" id="IPR000178">
    <property type="entry name" value="TF_IF2_bacterial-like"/>
</dbReference>
<dbReference type="InterPro" id="IPR015760">
    <property type="entry name" value="TIF_IF2"/>
</dbReference>
<dbReference type="InterPro" id="IPR023115">
    <property type="entry name" value="TIF_IF2_dom3"/>
</dbReference>
<dbReference type="InterPro" id="IPR036925">
    <property type="entry name" value="TIF_IF2_dom3_sf"/>
</dbReference>
<dbReference type="InterPro" id="IPR009000">
    <property type="entry name" value="Transl_B-barrel_sf"/>
</dbReference>
<dbReference type="NCBIfam" id="TIGR00487">
    <property type="entry name" value="IF-2"/>
    <property type="match status" value="1"/>
</dbReference>
<dbReference type="NCBIfam" id="TIGR00231">
    <property type="entry name" value="small_GTP"/>
    <property type="match status" value="1"/>
</dbReference>
<dbReference type="PANTHER" id="PTHR43381:SF5">
    <property type="entry name" value="TR-TYPE G DOMAIN-CONTAINING PROTEIN"/>
    <property type="match status" value="1"/>
</dbReference>
<dbReference type="PANTHER" id="PTHR43381">
    <property type="entry name" value="TRANSLATION INITIATION FACTOR IF-2-RELATED"/>
    <property type="match status" value="1"/>
</dbReference>
<dbReference type="Pfam" id="PF22042">
    <property type="entry name" value="EF-G_D2"/>
    <property type="match status" value="1"/>
</dbReference>
<dbReference type="Pfam" id="PF00009">
    <property type="entry name" value="GTP_EFTU"/>
    <property type="match status" value="1"/>
</dbReference>
<dbReference type="Pfam" id="PF11987">
    <property type="entry name" value="IF-2"/>
    <property type="match status" value="1"/>
</dbReference>
<dbReference type="Pfam" id="PF04760">
    <property type="entry name" value="IF2_N"/>
    <property type="match status" value="1"/>
</dbReference>
<dbReference type="PRINTS" id="PR00315">
    <property type="entry name" value="ELONGATNFCT"/>
</dbReference>
<dbReference type="SUPFAM" id="SSF52156">
    <property type="entry name" value="Initiation factor IF2/eIF5b, domain 3"/>
    <property type="match status" value="1"/>
</dbReference>
<dbReference type="SUPFAM" id="SSF52540">
    <property type="entry name" value="P-loop containing nucleoside triphosphate hydrolases"/>
    <property type="match status" value="1"/>
</dbReference>
<dbReference type="SUPFAM" id="SSF50447">
    <property type="entry name" value="Translation proteins"/>
    <property type="match status" value="2"/>
</dbReference>
<dbReference type="PROSITE" id="PS51722">
    <property type="entry name" value="G_TR_2"/>
    <property type="match status" value="1"/>
</dbReference>
<name>IF2_UREP2</name>
<reference key="1">
    <citation type="submission" date="2008-02" db="EMBL/GenBank/DDBJ databases">
        <title>Genome sequence of Ureaplasma parvum serovar 3.</title>
        <authorList>
            <person name="Methe B.A."/>
            <person name="Glass J."/>
            <person name="Waites K."/>
            <person name="Shrivastava S."/>
        </authorList>
    </citation>
    <scope>NUCLEOTIDE SEQUENCE [LARGE SCALE GENOMIC DNA]</scope>
    <source>
        <strain>ATCC 27815 / 27 / NCTC 11736</strain>
    </source>
</reference>
<gene>
    <name evidence="2" type="primary">infB</name>
    <name type="ordered locus">UPA3_0335</name>
</gene>
<proteinExistence type="inferred from homology"/>
<evidence type="ECO:0000250" key="1"/>
<evidence type="ECO:0000255" key="2">
    <source>
        <dbReference type="HAMAP-Rule" id="MF_00100"/>
    </source>
</evidence>
<sequence length="614" mass="68049">MAKKNIKQKKDNRIAIDVKKHIKKVDVGVFDGTFVFTSPLSISELAPKLNKSPNEIIMRYFKKGVVYNLNTILDEEQIGELCLEYDLDFKIEKNVNTENLLENIYFDDLEIDLVARAPIVTIMGHVDHGKTTLLDTIRKSSITASEAGGITQHIGAYQIIKDNRAITFIDTPGHEAFTEMRARGANLTDIVILVVAADDGIKMQTEEAIDHAKAANVPIIVFVNKMDKYEANPEKVLNQLSAKEIVAEELGGDVVFVKGSALKNEGISELLDSILLIAELNNYKANPNRLAYGTTIEANLDKGHGPLATLLVQNGTLRKGDYLVVGSTYGKIRNMFDEYDNEIEIALPSKPVKVSGFEEVPTAGDKFLALADEKQARAIANDVKQKKMRLERAMLQSSDIRTKIANGELKNINLIIKADVQGSLEALKGIFSSINIEGVTTTLIRSAIGTISESDVRLAQTSDAIIIGFNVRASRIIKDLADSVGVQIMNYDIIYKFKEDLELWMKGTLDPIIIEEVIGEAKVLKLFKHSQVGTICGCRVINGKIKRNALVRVLRDGIVIYNSKIATLQHNKDSVNEVIADKECGLTIANFNDIKENDIIEVYIKVEKKHDEVK</sequence>
<feature type="chain" id="PRO_1000075626" description="Translation initiation factor IF-2">
    <location>
        <begin position="1"/>
        <end position="614"/>
    </location>
</feature>
<feature type="domain" description="tr-type G">
    <location>
        <begin position="115"/>
        <end position="283"/>
    </location>
</feature>
<feature type="region of interest" description="G1" evidence="1">
    <location>
        <begin position="124"/>
        <end position="131"/>
    </location>
</feature>
<feature type="region of interest" description="G2" evidence="1">
    <location>
        <begin position="149"/>
        <end position="153"/>
    </location>
</feature>
<feature type="region of interest" description="G3" evidence="1">
    <location>
        <begin position="170"/>
        <end position="173"/>
    </location>
</feature>
<feature type="region of interest" description="G4" evidence="1">
    <location>
        <begin position="224"/>
        <end position="227"/>
    </location>
</feature>
<feature type="region of interest" description="G5" evidence="1">
    <location>
        <begin position="260"/>
        <end position="262"/>
    </location>
</feature>
<feature type="binding site" evidence="2">
    <location>
        <begin position="124"/>
        <end position="131"/>
    </location>
    <ligand>
        <name>GTP</name>
        <dbReference type="ChEBI" id="CHEBI:37565"/>
    </ligand>
</feature>
<feature type="binding site" evidence="2">
    <location>
        <begin position="170"/>
        <end position="174"/>
    </location>
    <ligand>
        <name>GTP</name>
        <dbReference type="ChEBI" id="CHEBI:37565"/>
    </ligand>
</feature>
<feature type="binding site" evidence="2">
    <location>
        <begin position="224"/>
        <end position="227"/>
    </location>
    <ligand>
        <name>GTP</name>
        <dbReference type="ChEBI" id="CHEBI:37565"/>
    </ligand>
</feature>
<organism>
    <name type="scientific">Ureaplasma parvum serovar 3 (strain ATCC 27815 / 27 / NCTC 11736)</name>
    <dbReference type="NCBI Taxonomy" id="505682"/>
    <lineage>
        <taxon>Bacteria</taxon>
        <taxon>Bacillati</taxon>
        <taxon>Mycoplasmatota</taxon>
        <taxon>Mycoplasmoidales</taxon>
        <taxon>Mycoplasmoidaceae</taxon>
        <taxon>Ureaplasma</taxon>
    </lineage>
</organism>
<keyword id="KW-0963">Cytoplasm</keyword>
<keyword id="KW-0342">GTP-binding</keyword>
<keyword id="KW-0396">Initiation factor</keyword>
<keyword id="KW-0547">Nucleotide-binding</keyword>
<keyword id="KW-0648">Protein biosynthesis</keyword>
<comment type="function">
    <text evidence="2">One of the essential components for the initiation of protein synthesis. Protects formylmethionyl-tRNA from spontaneous hydrolysis and promotes its binding to the 30S ribosomal subunits. Also involved in the hydrolysis of GTP during the formation of the 70S ribosomal complex.</text>
</comment>
<comment type="subcellular location">
    <subcellularLocation>
        <location evidence="2">Cytoplasm</location>
    </subcellularLocation>
</comment>
<comment type="similarity">
    <text evidence="2">Belongs to the TRAFAC class translation factor GTPase superfamily. Classic translation factor GTPase family. IF-2 subfamily.</text>
</comment>
<protein>
    <recommendedName>
        <fullName evidence="2">Translation initiation factor IF-2</fullName>
    </recommendedName>
</protein>
<accession>B1AIV8</accession>